<sequence length="499" mass="54185">MVLLYSQASWDQRSKADALVLPFWMKNSKAQEAAVVDEDYKLVYQNALSNFSGKKGETAFLFGNDHTKEQKIVLLGLGKSEEVSGTTVLEAYAQATTVLRKAKCKTVNILFPTISQLRFSVEEFLTNLAAGVLSLNYNYPTYHKVDTSLPFLEKVTVMGIVSKVGDKIFRKEESLFEGVYLTRDLVNTNADEVTPEKLAAVAKGLAGEFASLDVKILDRKAILKEKMGLLAAVAKGAAVEPRFIVLDYQGKPKSKDRTVLIGKGVTFDSGGLDLKPGKAMITMKEDMAGAATVLGIFSALASLELPINVTGIIPATENAIGSAAYKMGDVYVGMTGLSVEIGSTDAEGRLILADAISYALKYCNPTRIIDFATLTGAMVVSLGESVAGFFANNDVLARDLAEASSETGEALWRMPLVEKYDQALHSDIADMKNIGSNRAGSITAALFLQRFLEDNPVAWAHLDIAGTAYHEKEELPYPKYATGFGVRCLIHYMEKFLSK</sequence>
<keyword id="KW-0031">Aminopeptidase</keyword>
<keyword id="KW-0963">Cytoplasm</keyword>
<keyword id="KW-0378">Hydrolase</keyword>
<keyword id="KW-0464">Manganese</keyword>
<keyword id="KW-0479">Metal-binding</keyword>
<keyword id="KW-0645">Protease</keyword>
<evidence type="ECO:0000255" key="1">
    <source>
        <dbReference type="HAMAP-Rule" id="MF_00181"/>
    </source>
</evidence>
<feature type="chain" id="PRO_1000098315" description="Probable cytosol aminopeptidase">
    <location>
        <begin position="1"/>
        <end position="499"/>
    </location>
</feature>
<feature type="active site" evidence="1">
    <location>
        <position position="275"/>
    </location>
</feature>
<feature type="active site" evidence="1">
    <location>
        <position position="349"/>
    </location>
</feature>
<feature type="binding site" evidence="1">
    <location>
        <position position="263"/>
    </location>
    <ligand>
        <name>Mn(2+)</name>
        <dbReference type="ChEBI" id="CHEBI:29035"/>
        <label>2</label>
    </ligand>
</feature>
<feature type="binding site" evidence="1">
    <location>
        <position position="268"/>
    </location>
    <ligand>
        <name>Mn(2+)</name>
        <dbReference type="ChEBI" id="CHEBI:29035"/>
        <label>1</label>
    </ligand>
</feature>
<feature type="binding site" evidence="1">
    <location>
        <position position="268"/>
    </location>
    <ligand>
        <name>Mn(2+)</name>
        <dbReference type="ChEBI" id="CHEBI:29035"/>
        <label>2</label>
    </ligand>
</feature>
<feature type="binding site" evidence="1">
    <location>
        <position position="286"/>
    </location>
    <ligand>
        <name>Mn(2+)</name>
        <dbReference type="ChEBI" id="CHEBI:29035"/>
        <label>2</label>
    </ligand>
</feature>
<feature type="binding site" evidence="1">
    <location>
        <position position="345"/>
    </location>
    <ligand>
        <name>Mn(2+)</name>
        <dbReference type="ChEBI" id="CHEBI:29035"/>
        <label>1</label>
    </ligand>
</feature>
<feature type="binding site" evidence="1">
    <location>
        <position position="347"/>
    </location>
    <ligand>
        <name>Mn(2+)</name>
        <dbReference type="ChEBI" id="CHEBI:29035"/>
        <label>1</label>
    </ligand>
</feature>
<feature type="binding site" evidence="1">
    <location>
        <position position="347"/>
    </location>
    <ligand>
        <name>Mn(2+)</name>
        <dbReference type="ChEBI" id="CHEBI:29035"/>
        <label>2</label>
    </ligand>
</feature>
<comment type="function">
    <text evidence="1">Presumably involved in the processing and regular turnover of intracellular proteins. Catalyzes the removal of unsubstituted N-terminal amino acids from various peptides.</text>
</comment>
<comment type="catalytic activity">
    <reaction evidence="1">
        <text>Release of an N-terminal amino acid, Xaa-|-Yaa-, in which Xaa is preferably Leu, but may be other amino acids including Pro although not Arg or Lys, and Yaa may be Pro. Amino acid amides and methyl esters are also readily hydrolyzed, but rates on arylamides are exceedingly low.</text>
        <dbReference type="EC" id="3.4.11.1"/>
    </reaction>
</comment>
<comment type="catalytic activity">
    <reaction evidence="1">
        <text>Release of an N-terminal amino acid, preferentially leucine, but not glutamic or aspartic acids.</text>
        <dbReference type="EC" id="3.4.11.10"/>
    </reaction>
</comment>
<comment type="cofactor">
    <cofactor evidence="1">
        <name>Mn(2+)</name>
        <dbReference type="ChEBI" id="CHEBI:29035"/>
    </cofactor>
    <text evidence="1">Binds 2 manganese ions per subunit.</text>
</comment>
<comment type="subcellular location">
    <subcellularLocation>
        <location evidence="1">Cytoplasm</location>
    </subcellularLocation>
</comment>
<comment type="similarity">
    <text evidence="1">Belongs to the peptidase M17 family.</text>
</comment>
<gene>
    <name evidence="1" type="primary">pepA</name>
    <name type="ordered locus">CTL0301</name>
</gene>
<organism>
    <name type="scientific">Chlamydia trachomatis serovar L2 (strain ATCC VR-902B / DSM 19102 / 434/Bu)</name>
    <dbReference type="NCBI Taxonomy" id="471472"/>
    <lineage>
        <taxon>Bacteria</taxon>
        <taxon>Pseudomonadati</taxon>
        <taxon>Chlamydiota</taxon>
        <taxon>Chlamydiia</taxon>
        <taxon>Chlamydiales</taxon>
        <taxon>Chlamydiaceae</taxon>
        <taxon>Chlamydia/Chlamydophila group</taxon>
        <taxon>Chlamydia</taxon>
    </lineage>
</organism>
<accession>B0B9F3</accession>
<dbReference type="EC" id="3.4.11.1" evidence="1"/>
<dbReference type="EC" id="3.4.11.10" evidence="1"/>
<dbReference type="EMBL" id="AM884176">
    <property type="protein sequence ID" value="CAP03740.1"/>
    <property type="molecule type" value="Genomic_DNA"/>
</dbReference>
<dbReference type="RefSeq" id="WP_009873516.1">
    <property type="nucleotide sequence ID" value="NC_010287.1"/>
</dbReference>
<dbReference type="RefSeq" id="YP_001654384.1">
    <property type="nucleotide sequence ID" value="NC_010287.1"/>
</dbReference>
<dbReference type="SMR" id="B0B9F3"/>
<dbReference type="KEGG" id="ctb:CTL0301"/>
<dbReference type="PATRIC" id="fig|471472.4.peg.326"/>
<dbReference type="HOGENOM" id="CLU_013734_2_2_0"/>
<dbReference type="Proteomes" id="UP001154402">
    <property type="component" value="Chromosome"/>
</dbReference>
<dbReference type="GO" id="GO:0005737">
    <property type="term" value="C:cytoplasm"/>
    <property type="evidence" value="ECO:0007669"/>
    <property type="project" value="UniProtKB-SubCell"/>
</dbReference>
<dbReference type="GO" id="GO:0030145">
    <property type="term" value="F:manganese ion binding"/>
    <property type="evidence" value="ECO:0007669"/>
    <property type="project" value="UniProtKB-UniRule"/>
</dbReference>
<dbReference type="GO" id="GO:0070006">
    <property type="term" value="F:metalloaminopeptidase activity"/>
    <property type="evidence" value="ECO:0007669"/>
    <property type="project" value="InterPro"/>
</dbReference>
<dbReference type="GO" id="GO:0006508">
    <property type="term" value="P:proteolysis"/>
    <property type="evidence" value="ECO:0007669"/>
    <property type="project" value="UniProtKB-KW"/>
</dbReference>
<dbReference type="CDD" id="cd00433">
    <property type="entry name" value="Peptidase_M17"/>
    <property type="match status" value="1"/>
</dbReference>
<dbReference type="Gene3D" id="3.40.220.10">
    <property type="entry name" value="Leucine Aminopeptidase, subunit E, domain 1"/>
    <property type="match status" value="1"/>
</dbReference>
<dbReference type="Gene3D" id="3.40.630.10">
    <property type="entry name" value="Zn peptidases"/>
    <property type="match status" value="1"/>
</dbReference>
<dbReference type="HAMAP" id="MF_00181">
    <property type="entry name" value="Cytosol_peptidase_M17"/>
    <property type="match status" value="1"/>
</dbReference>
<dbReference type="InterPro" id="IPR011356">
    <property type="entry name" value="Leucine_aapep/pepB"/>
</dbReference>
<dbReference type="InterPro" id="IPR043472">
    <property type="entry name" value="Macro_dom-like"/>
</dbReference>
<dbReference type="InterPro" id="IPR000819">
    <property type="entry name" value="Peptidase_M17_C"/>
</dbReference>
<dbReference type="InterPro" id="IPR023042">
    <property type="entry name" value="Peptidase_M17_leu_NH2_pept"/>
</dbReference>
<dbReference type="InterPro" id="IPR008283">
    <property type="entry name" value="Peptidase_M17_N"/>
</dbReference>
<dbReference type="NCBIfam" id="NF002078">
    <property type="entry name" value="PRK00913.2-5"/>
    <property type="match status" value="1"/>
</dbReference>
<dbReference type="NCBIfam" id="NF002083">
    <property type="entry name" value="PRK00913.3-5"/>
    <property type="match status" value="1"/>
</dbReference>
<dbReference type="PANTHER" id="PTHR11963:SF23">
    <property type="entry name" value="CYTOSOL AMINOPEPTIDASE"/>
    <property type="match status" value="1"/>
</dbReference>
<dbReference type="PANTHER" id="PTHR11963">
    <property type="entry name" value="LEUCINE AMINOPEPTIDASE-RELATED"/>
    <property type="match status" value="1"/>
</dbReference>
<dbReference type="Pfam" id="PF00883">
    <property type="entry name" value="Peptidase_M17"/>
    <property type="match status" value="1"/>
</dbReference>
<dbReference type="Pfam" id="PF02789">
    <property type="entry name" value="Peptidase_M17_N"/>
    <property type="match status" value="1"/>
</dbReference>
<dbReference type="PRINTS" id="PR00481">
    <property type="entry name" value="LAMNOPPTDASE"/>
</dbReference>
<dbReference type="SUPFAM" id="SSF52949">
    <property type="entry name" value="Macro domain-like"/>
    <property type="match status" value="1"/>
</dbReference>
<dbReference type="SUPFAM" id="SSF53187">
    <property type="entry name" value="Zn-dependent exopeptidases"/>
    <property type="match status" value="1"/>
</dbReference>
<dbReference type="PROSITE" id="PS00631">
    <property type="entry name" value="CYTOSOL_AP"/>
    <property type="match status" value="1"/>
</dbReference>
<proteinExistence type="inferred from homology"/>
<name>AMPA_CHLT2</name>
<reference key="1">
    <citation type="journal article" date="2008" name="Genome Res.">
        <title>Chlamydia trachomatis: genome sequence analysis of lymphogranuloma venereum isolates.</title>
        <authorList>
            <person name="Thomson N.R."/>
            <person name="Holden M.T.G."/>
            <person name="Carder C."/>
            <person name="Lennard N."/>
            <person name="Lockey S.J."/>
            <person name="Marsh P."/>
            <person name="Skipp P."/>
            <person name="O'Connor C.D."/>
            <person name="Goodhead I."/>
            <person name="Norbertzcak H."/>
            <person name="Harris B."/>
            <person name="Ormond D."/>
            <person name="Rance R."/>
            <person name="Quail M.A."/>
            <person name="Parkhill J."/>
            <person name="Stephens R.S."/>
            <person name="Clarke I.N."/>
        </authorList>
    </citation>
    <scope>NUCLEOTIDE SEQUENCE [LARGE SCALE GENOMIC DNA]</scope>
    <source>
        <strain>ATCC VR-902B / DSM 19102 / 434/Bu</strain>
    </source>
</reference>
<protein>
    <recommendedName>
        <fullName evidence="1">Probable cytosol aminopeptidase</fullName>
        <ecNumber evidence="1">3.4.11.1</ecNumber>
    </recommendedName>
    <alternativeName>
        <fullName evidence="1">Leucine aminopeptidase</fullName>
        <shortName evidence="1">LAP</shortName>
        <ecNumber evidence="1">3.4.11.10</ecNumber>
    </alternativeName>
    <alternativeName>
        <fullName evidence="1">Leucyl aminopeptidase</fullName>
    </alternativeName>
</protein>